<feature type="chain" id="PRO_0000278644" description="Cilia- and flagella-associated protein 36">
    <location>
        <begin position="1"/>
        <end position="339"/>
    </location>
</feature>
<feature type="region of interest" description="Disordered" evidence="3">
    <location>
        <begin position="177"/>
        <end position="212"/>
    </location>
</feature>
<feature type="region of interest" description="Disordered" evidence="3">
    <location>
        <begin position="281"/>
        <end position="318"/>
    </location>
</feature>
<feature type="coiled-coil region" evidence="2">
    <location>
        <begin position="142"/>
        <end position="188"/>
    </location>
</feature>
<feature type="coiled-coil region" evidence="2">
    <location>
        <begin position="255"/>
        <end position="330"/>
    </location>
</feature>
<feature type="compositionally biased region" description="Polar residues" evidence="3">
    <location>
        <begin position="187"/>
        <end position="200"/>
    </location>
</feature>
<feature type="compositionally biased region" description="Basic and acidic residues" evidence="3">
    <location>
        <begin position="281"/>
        <end position="313"/>
    </location>
</feature>
<feature type="sequence conflict" description="In Ref. 1; CAJ82610." evidence="4" ref="1">
    <original>S</original>
    <variation>L</variation>
    <location>
        <position position="285"/>
    </location>
</feature>
<reference key="1">
    <citation type="submission" date="2006-10" db="EMBL/GenBank/DDBJ databases">
        <authorList>
            <consortium name="Sanger Xenopus tropicalis EST/cDNA project"/>
        </authorList>
    </citation>
    <scope>NUCLEOTIDE SEQUENCE [LARGE SCALE MRNA]</scope>
    <source>
        <tissue>Neurula</tissue>
    </source>
</reference>
<reference key="2">
    <citation type="submission" date="2003-11" db="EMBL/GenBank/DDBJ databases">
        <authorList>
            <consortium name="NIH - Xenopus Gene Collection (XGC) project"/>
        </authorList>
    </citation>
    <scope>NUCLEOTIDE SEQUENCE [LARGE SCALE MRNA]</scope>
    <source>
        <tissue>Embryo</tissue>
    </source>
</reference>
<name>CFA36_XENTR</name>
<protein>
    <recommendedName>
        <fullName evidence="4">Cilia- and flagella-associated protein 36</fullName>
    </recommendedName>
    <alternativeName>
        <fullName evidence="4">Coiled-coil domain-containing protein 104</fullName>
    </alternativeName>
</protein>
<proteinExistence type="evidence at transcript level"/>
<sequence>MASDTEWVLESVLGFVSGPVWTVPVLEFMEQKCSVFDDEEENKLSYTEIHNEYKELVETLLTQHLNEVGISEEQFQEACTAPLAHSATLKTILQPVLAVEDFKIFKAMMVQKNIELQLQAIRIIQERNGVLPDCLQHGRDIISDLEQQEMKLVSEALRLSKEEYEREQLRRSAKELNLTLGEHSENKQSSGSERTPNNTELPVKTQKEEKQPVNMLESPYKEVSIKLKEMSNTEAAEAWLEQARKEAGILSSVTNLSQAEKEQLQKRAEYLRRRREELLAKKQESKKMAQNSEEHEEKATCSKQEMTEEEKKSLQRRKRLAEKLKEEVILSCEKSGSAS</sequence>
<comment type="subcellular location">
    <subcellularLocation>
        <location evidence="1">Nucleus</location>
    </subcellularLocation>
    <subcellularLocation>
        <location evidence="1">Cytoplasm</location>
    </subcellularLocation>
    <subcellularLocation>
        <location evidence="4">Cell projection</location>
        <location evidence="4">Cilium</location>
        <location evidence="4">Flagellum</location>
    </subcellularLocation>
</comment>
<comment type="similarity">
    <text evidence="4">Belongs to the CFAP36 family.</text>
</comment>
<evidence type="ECO:0000250" key="1">
    <source>
        <dbReference type="UniProtKB" id="Q96G28"/>
    </source>
</evidence>
<evidence type="ECO:0000255" key="2"/>
<evidence type="ECO:0000256" key="3">
    <source>
        <dbReference type="SAM" id="MobiDB-lite"/>
    </source>
</evidence>
<evidence type="ECO:0000305" key="4"/>
<gene>
    <name evidence="4" type="primary">cfap36</name>
    <name evidence="4" type="synonym">ccdc104</name>
    <name type="ORF">TNeu040m17.1</name>
</gene>
<accession>Q28IH8</accession>
<accession>Q6P629</accession>
<keyword id="KW-0966">Cell projection</keyword>
<keyword id="KW-0969">Cilium</keyword>
<keyword id="KW-0175">Coiled coil</keyword>
<keyword id="KW-0963">Cytoplasm</keyword>
<keyword id="KW-0282">Flagellum</keyword>
<keyword id="KW-0539">Nucleus</keyword>
<keyword id="KW-1185">Reference proteome</keyword>
<dbReference type="EMBL" id="CR760384">
    <property type="protein sequence ID" value="CAJ82610.1"/>
    <property type="molecule type" value="mRNA"/>
</dbReference>
<dbReference type="EMBL" id="BC062505">
    <property type="protein sequence ID" value="AAH62505.1"/>
    <property type="molecule type" value="mRNA"/>
</dbReference>
<dbReference type="EMBL" id="BC087804">
    <property type="protein sequence ID" value="AAH87804.1"/>
    <property type="molecule type" value="mRNA"/>
</dbReference>
<dbReference type="RefSeq" id="NP_989091.2">
    <property type="nucleotide sequence ID" value="NM_203760.3"/>
</dbReference>
<dbReference type="SMR" id="Q28IH8"/>
<dbReference type="FunCoup" id="Q28IH8">
    <property type="interactions" value="272"/>
</dbReference>
<dbReference type="STRING" id="8364.ENSXETP00000013459"/>
<dbReference type="PaxDb" id="8364-ENSXETP00000013374"/>
<dbReference type="DNASU" id="394695"/>
<dbReference type="GeneID" id="394695"/>
<dbReference type="KEGG" id="xtr:394695"/>
<dbReference type="AGR" id="Xenbase:XB-GENE-988920"/>
<dbReference type="CTD" id="112942"/>
<dbReference type="Xenbase" id="XB-GENE-988920">
    <property type="gene designation" value="cfap36"/>
</dbReference>
<dbReference type="eggNOG" id="KOG4511">
    <property type="taxonomic scope" value="Eukaryota"/>
</dbReference>
<dbReference type="InParanoid" id="Q28IH8"/>
<dbReference type="OrthoDB" id="272687at2759"/>
<dbReference type="Proteomes" id="UP000008143">
    <property type="component" value="Chromosome 5"/>
</dbReference>
<dbReference type="Bgee" id="ENSXETG00000006071">
    <property type="expression patterns" value="Expressed in mesonephros and 12 other cell types or tissues"/>
</dbReference>
<dbReference type="GO" id="GO:0005737">
    <property type="term" value="C:cytoplasm"/>
    <property type="evidence" value="ECO:0007669"/>
    <property type="project" value="UniProtKB-SubCell"/>
</dbReference>
<dbReference type="GO" id="GO:0031514">
    <property type="term" value="C:motile cilium"/>
    <property type="evidence" value="ECO:0007669"/>
    <property type="project" value="UniProtKB-SubCell"/>
</dbReference>
<dbReference type="GO" id="GO:0005634">
    <property type="term" value="C:nucleus"/>
    <property type="evidence" value="ECO:0007669"/>
    <property type="project" value="UniProtKB-SubCell"/>
</dbReference>
<dbReference type="Gene3D" id="1.20.1520.10">
    <property type="entry name" value="ADP-ribosylation factor-like 2-binding protein, domain"/>
    <property type="match status" value="1"/>
</dbReference>
<dbReference type="InterPro" id="IPR023379">
    <property type="entry name" value="BART_dom"/>
</dbReference>
<dbReference type="InterPro" id="IPR042541">
    <property type="entry name" value="BART_sf"/>
</dbReference>
<dbReference type="InterPro" id="IPR038888">
    <property type="entry name" value="CFAP36"/>
</dbReference>
<dbReference type="PANTHER" id="PTHR21532:SF0">
    <property type="entry name" value="CILIA- AND FLAGELLA-ASSOCIATED PROTEIN 36"/>
    <property type="match status" value="1"/>
</dbReference>
<dbReference type="PANTHER" id="PTHR21532">
    <property type="entry name" value="PHOSPHODIESTERASE HL"/>
    <property type="match status" value="1"/>
</dbReference>
<dbReference type="Pfam" id="PF11527">
    <property type="entry name" value="ARL2_Bind_BART"/>
    <property type="match status" value="1"/>
</dbReference>
<organism>
    <name type="scientific">Xenopus tropicalis</name>
    <name type="common">Western clawed frog</name>
    <name type="synonym">Silurana tropicalis</name>
    <dbReference type="NCBI Taxonomy" id="8364"/>
    <lineage>
        <taxon>Eukaryota</taxon>
        <taxon>Metazoa</taxon>
        <taxon>Chordata</taxon>
        <taxon>Craniata</taxon>
        <taxon>Vertebrata</taxon>
        <taxon>Euteleostomi</taxon>
        <taxon>Amphibia</taxon>
        <taxon>Batrachia</taxon>
        <taxon>Anura</taxon>
        <taxon>Pipoidea</taxon>
        <taxon>Pipidae</taxon>
        <taxon>Xenopodinae</taxon>
        <taxon>Xenopus</taxon>
        <taxon>Silurana</taxon>
    </lineage>
</organism>